<name>NU6M_ANAPL</name>
<gene>
    <name type="primary">MT-ND6</name>
    <name type="synonym">MTND6</name>
    <name type="synonym">NADH6</name>
    <name type="synonym">ND6</name>
</gene>
<sequence length="81" mass="8511">MTYFVFFLGICFVVGVLGVASNPSPYYGVVGLVLASVAGCGWLLSLGVSFVALVLFMVYFGGMLVVFVYSVALAAEPFPEA</sequence>
<geneLocation type="mitochondrion"/>
<keyword id="KW-0249">Electron transport</keyword>
<keyword id="KW-0472">Membrane</keyword>
<keyword id="KW-0496">Mitochondrion</keyword>
<keyword id="KW-0520">NAD</keyword>
<keyword id="KW-0679">Respiratory chain</keyword>
<keyword id="KW-1278">Translocase</keyword>
<keyword id="KW-0812">Transmembrane</keyword>
<keyword id="KW-1133">Transmembrane helix</keyword>
<keyword id="KW-0813">Transport</keyword>
<keyword id="KW-0830">Ubiquinone</keyword>
<dbReference type="EC" id="7.1.1.2"/>
<dbReference type="EMBL" id="X55526">
    <property type="protein sequence ID" value="CAA39143.1"/>
    <property type="molecule type" value="Genomic_DNA"/>
</dbReference>
<dbReference type="EMBL" id="L22477">
    <property type="protein sequence ID" value="AAB52615.1"/>
    <property type="molecule type" value="Genomic_DNA"/>
</dbReference>
<dbReference type="SMR" id="Q06059"/>
<dbReference type="Proteomes" id="UP000694400">
    <property type="component" value="Unplaced"/>
</dbReference>
<dbReference type="GO" id="GO:0031966">
    <property type="term" value="C:mitochondrial membrane"/>
    <property type="evidence" value="ECO:0007669"/>
    <property type="project" value="UniProtKB-SubCell"/>
</dbReference>
<dbReference type="GO" id="GO:0008137">
    <property type="term" value="F:NADH dehydrogenase (ubiquinone) activity"/>
    <property type="evidence" value="ECO:0007669"/>
    <property type="project" value="UniProtKB-EC"/>
</dbReference>
<dbReference type="Gene3D" id="1.20.120.1200">
    <property type="entry name" value="NADH-ubiquinone/plastoquinone oxidoreductase chain 6, subunit NuoJ"/>
    <property type="match status" value="1"/>
</dbReference>
<dbReference type="InterPro" id="IPR050269">
    <property type="entry name" value="ComplexI_Subunit6"/>
</dbReference>
<dbReference type="InterPro" id="IPR001457">
    <property type="entry name" value="NADH_UbQ/plastoQ_OxRdtase_su6"/>
</dbReference>
<dbReference type="InterPro" id="IPR042106">
    <property type="entry name" value="Nuo/plastoQ_OxRdtase_6_NuoJ"/>
</dbReference>
<dbReference type="PANTHER" id="PTHR11435">
    <property type="entry name" value="NADH UBIQUINONE OXIDOREDUCTASE SUBUNIT ND6"/>
    <property type="match status" value="1"/>
</dbReference>
<dbReference type="PANTHER" id="PTHR11435:SF1">
    <property type="entry name" value="NADH-UBIQUINONE OXIDOREDUCTASE CHAIN 6"/>
    <property type="match status" value="1"/>
</dbReference>
<dbReference type="Pfam" id="PF00499">
    <property type="entry name" value="Oxidored_q3"/>
    <property type="match status" value="1"/>
</dbReference>
<proteinExistence type="inferred from homology"/>
<accession>Q06059</accession>
<comment type="function">
    <text evidence="1">Core subunit of the mitochondrial membrane respiratory chain NADH dehydrogenase (Complex I) that is believed to belong to the minimal assembly required for catalysis. Complex I functions in the transfer of electrons from NADH to the respiratory chain. The immediate electron acceptor for the enzyme is believed to be ubiquinone (By similarity).</text>
</comment>
<comment type="catalytic activity">
    <reaction>
        <text>a ubiquinone + NADH + 5 H(+)(in) = a ubiquinol + NAD(+) + 4 H(+)(out)</text>
        <dbReference type="Rhea" id="RHEA:29091"/>
        <dbReference type="Rhea" id="RHEA-COMP:9565"/>
        <dbReference type="Rhea" id="RHEA-COMP:9566"/>
        <dbReference type="ChEBI" id="CHEBI:15378"/>
        <dbReference type="ChEBI" id="CHEBI:16389"/>
        <dbReference type="ChEBI" id="CHEBI:17976"/>
        <dbReference type="ChEBI" id="CHEBI:57540"/>
        <dbReference type="ChEBI" id="CHEBI:57945"/>
        <dbReference type="EC" id="7.1.1.2"/>
    </reaction>
</comment>
<comment type="subcellular location">
    <subcellularLocation>
        <location evidence="3">Mitochondrion membrane</location>
        <topology evidence="3">Multi-pass membrane protein</topology>
    </subcellularLocation>
</comment>
<comment type="similarity">
    <text evidence="3">Belongs to the complex I subunit 6 family.</text>
</comment>
<organism>
    <name type="scientific">Anas platyrhynchos</name>
    <name type="common">Mallard</name>
    <name type="synonym">Anas boschas</name>
    <dbReference type="NCBI Taxonomy" id="8839"/>
    <lineage>
        <taxon>Eukaryota</taxon>
        <taxon>Metazoa</taxon>
        <taxon>Chordata</taxon>
        <taxon>Craniata</taxon>
        <taxon>Vertebrata</taxon>
        <taxon>Euteleostomi</taxon>
        <taxon>Archelosauria</taxon>
        <taxon>Archosauria</taxon>
        <taxon>Dinosauria</taxon>
        <taxon>Saurischia</taxon>
        <taxon>Theropoda</taxon>
        <taxon>Coelurosauria</taxon>
        <taxon>Aves</taxon>
        <taxon>Neognathae</taxon>
        <taxon>Galloanserae</taxon>
        <taxon>Anseriformes</taxon>
        <taxon>Anatidae</taxon>
        <taxon>Anatinae</taxon>
        <taxon>Anas</taxon>
    </lineage>
</organism>
<evidence type="ECO:0000250" key="1"/>
<evidence type="ECO:0000255" key="2"/>
<evidence type="ECO:0000305" key="3"/>
<feature type="chain" id="PRO_0000118237" description="NADH-ubiquinone oxidoreductase chain 6">
    <location>
        <begin position="1"/>
        <end position="81" status="greater than"/>
    </location>
</feature>
<feature type="transmembrane region" description="Helical" evidence="2">
    <location>
        <begin position="1"/>
        <end position="21"/>
    </location>
</feature>
<feature type="transmembrane region" description="Helical" evidence="2">
    <location>
        <begin position="27"/>
        <end position="47"/>
    </location>
</feature>
<feature type="transmembrane region" description="Helical" evidence="2">
    <location>
        <begin position="48"/>
        <end position="68"/>
    </location>
</feature>
<feature type="non-terminal residue">
    <location>
        <position position="81"/>
    </location>
</feature>
<reference key="1">
    <citation type="journal article" date="1990" name="Curr. Genet.">
        <title>Gene organization of the Peking duck mitochondrial genome.</title>
        <authorList>
            <person name="Desjardins P."/>
            <person name="Ramirez V."/>
            <person name="Morais R."/>
        </authorList>
    </citation>
    <scope>NUCLEOTIDE SEQUENCE [GENOMIC DNA]</scope>
    <source>
        <strain>Pekin breed</strain>
        <tissue>Liver</tissue>
    </source>
</reference>
<reference key="2">
    <citation type="journal article" date="1993" name="J. Mol. Evol.">
        <title>Molecular characterization and evolution of a duck mitochondrial genome.</title>
        <authorList>
            <person name="Ramirez V."/>
            <person name="Savoie P."/>
            <person name="Morais R."/>
        </authorList>
    </citation>
    <scope>NUCLEOTIDE SEQUENCE [GENOMIC DNA]</scope>
    <source>
        <strain>Pekin breed</strain>
        <tissue>Liver</tissue>
    </source>
</reference>
<protein>
    <recommendedName>
        <fullName>NADH-ubiquinone oxidoreductase chain 6</fullName>
        <ecNumber>7.1.1.2</ecNumber>
    </recommendedName>
    <alternativeName>
        <fullName>NADH dehydrogenase subunit 6</fullName>
    </alternativeName>
</protein>